<protein>
    <recommendedName>
        <fullName>Tetracenomycin F2 cyclase</fullName>
        <ecNumber>4.2.1.154</ecNumber>
    </recommendedName>
    <alternativeName>
        <fullName>Tetracenomycin polyketide synthesis protein TcmI</fullName>
    </alternativeName>
</protein>
<name>TCMI_STRGA</name>
<proteinExistence type="evidence at protein level"/>
<accession>P39890</accession>
<keyword id="KW-0002">3D-structure</keyword>
<keyword id="KW-0045">Antibiotic biosynthesis</keyword>
<keyword id="KW-0903">Direct protein sequencing</keyword>
<keyword id="KW-0456">Lyase</keyword>
<dbReference type="EC" id="4.2.1.154"/>
<dbReference type="EMBL" id="M80674">
    <property type="protein sequence ID" value="AAA67513.1"/>
    <property type="molecule type" value="Genomic_DNA"/>
</dbReference>
<dbReference type="PIR" id="B53291">
    <property type="entry name" value="B53291"/>
</dbReference>
<dbReference type="RefSeq" id="WP_043504911.1">
    <property type="nucleotide sequence ID" value="NZ_CP009438.1"/>
</dbReference>
<dbReference type="PDB" id="1TUW">
    <property type="method" value="X-ray"/>
    <property type="resolution" value="1.90 A"/>
    <property type="chains" value="A=1-109"/>
</dbReference>
<dbReference type="PDBsum" id="1TUW"/>
<dbReference type="SMR" id="P39890"/>
<dbReference type="STRING" id="1907.SGLAU_26345"/>
<dbReference type="eggNOG" id="ENOG50332TT">
    <property type="taxonomic scope" value="Bacteria"/>
</dbReference>
<dbReference type="OrthoDB" id="4147507at2"/>
<dbReference type="BioCyc" id="MetaCyc:MONOMER-18608"/>
<dbReference type="BRENDA" id="4.2.1.154">
    <property type="organism ID" value="6020"/>
</dbReference>
<dbReference type="UniPathway" id="UPA00174"/>
<dbReference type="EvolutionaryTrace" id="P39890"/>
<dbReference type="GO" id="GO:0016829">
    <property type="term" value="F:lyase activity"/>
    <property type="evidence" value="ECO:0007669"/>
    <property type="project" value="UniProtKB-KW"/>
</dbReference>
<dbReference type="GO" id="GO:0017000">
    <property type="term" value="P:antibiotic biosynthetic process"/>
    <property type="evidence" value="ECO:0007669"/>
    <property type="project" value="UniProtKB-KW"/>
</dbReference>
<dbReference type="GO" id="GO:0030639">
    <property type="term" value="P:polyketide biosynthetic process"/>
    <property type="evidence" value="ECO:0007669"/>
    <property type="project" value="InterPro"/>
</dbReference>
<dbReference type="Gene3D" id="3.30.70.1090">
    <property type="entry name" value="Dimeric alpha+beta barrel"/>
    <property type="match status" value="1"/>
</dbReference>
<dbReference type="InterPro" id="IPR011008">
    <property type="entry name" value="Dimeric_a/b-barrel"/>
</dbReference>
<dbReference type="InterPro" id="IPR006765">
    <property type="entry name" value="Polyketide_synth_cyclase"/>
</dbReference>
<dbReference type="InterPro" id="IPR038474">
    <property type="entry name" value="Polyketide_synth_cyclase_sf"/>
</dbReference>
<dbReference type="Pfam" id="PF04673">
    <property type="entry name" value="Cyclase_polyket"/>
    <property type="match status" value="1"/>
</dbReference>
<dbReference type="SUPFAM" id="SSF54909">
    <property type="entry name" value="Dimeric alpha+beta barrel"/>
    <property type="match status" value="1"/>
</dbReference>
<comment type="function">
    <text evidence="2">Catalyzing the conversion of tetracenomycin F2 to tetracenomycin F1.</text>
</comment>
<comment type="catalytic activity">
    <reaction evidence="2">
        <text>tetracenomycin F2 + H(+) = tetracenomycin F1 + H2O</text>
        <dbReference type="Rhea" id="RHEA:38851"/>
        <dbReference type="ChEBI" id="CHEBI:15377"/>
        <dbReference type="ChEBI" id="CHEBI:15378"/>
        <dbReference type="ChEBI" id="CHEBI:74931"/>
        <dbReference type="ChEBI" id="CHEBI:77982"/>
        <dbReference type="EC" id="4.2.1.154"/>
    </reaction>
</comment>
<comment type="biophysicochemical properties">
    <kinetics>
        <KM evidence="2">121 uM for tetracenomycin F2</KM>
        <Vmax evidence="2">704.0 nmol/min/mg enzyme</Vmax>
    </kinetics>
    <phDependence>
        <text evidence="2">Optimum pH is 6-6.5.</text>
    </phDependence>
</comment>
<comment type="pathway">
    <text>Antibiotic biosynthesis; tetracenomycin C biosynthesis.</text>
</comment>
<comment type="subunit">
    <text evidence="1">Homodimer.</text>
</comment>
<evidence type="ECO:0000269" key="1">
    <source>
    </source>
</evidence>
<evidence type="ECO:0000269" key="2">
    <source>
    </source>
</evidence>
<evidence type="ECO:0007829" key="3">
    <source>
        <dbReference type="PDB" id="1TUW"/>
    </source>
</evidence>
<sequence>MAYRALMVLRMDPADAEHVAAAFAEHDTTELPLEIGVRRRVLFRFHDLYMHLIEADDDIMERLYQARSHPLFQEVNERVGQYLTPYAQDWEELKDSKAEVFYSWTAPDS</sequence>
<gene>
    <name type="primary">tcmI</name>
</gene>
<feature type="initiator methionine" description="Removed" evidence="2">
    <location>
        <position position="1"/>
    </location>
</feature>
<feature type="chain" id="PRO_0000072454" description="Tetracenomycin F2 cyclase">
    <location>
        <begin position="2"/>
        <end position="109"/>
    </location>
</feature>
<feature type="mutagenesis site" description="Relative activity reduced to 15% of wild-type." evidence="1">
    <original>H</original>
    <variation>A</variation>
    <location>
        <position position="26"/>
    </location>
</feature>
<feature type="mutagenesis site" description="No effect." evidence="1">
    <original>H</original>
    <variation>Q</variation>
    <location>
        <position position="26"/>
    </location>
</feature>
<feature type="mutagenesis site" description="Relative activity reduced to 14% of wild-type." evidence="1">
    <original>D</original>
    <variation>N</variation>
    <location>
        <position position="27"/>
    </location>
</feature>
<feature type="mutagenesis site" description="Relative activity reduced to 10% of wild-type." evidence="1">
    <original>R</original>
    <variation>G</variation>
    <location>
        <position position="40"/>
    </location>
</feature>
<feature type="mutagenesis site" description="Relative activity reduced to 16% of wild-type." evidence="1">
    <original>R</original>
    <variation>K</variation>
    <location>
        <position position="40"/>
    </location>
</feature>
<feature type="mutagenesis site" description="Relative activity reduced to 16% of wild-type." evidence="1">
    <original>H</original>
    <variation>A</variation>
    <location>
        <position position="51"/>
    </location>
</feature>
<feature type="mutagenesis site" description="No effect." evidence="1">
    <original>H</original>
    <variation>Q</variation>
    <location>
        <position position="51"/>
    </location>
</feature>
<feature type="strand" evidence="3">
    <location>
        <begin position="3"/>
        <end position="11"/>
    </location>
</feature>
<feature type="helix" evidence="3">
    <location>
        <begin position="13"/>
        <end position="15"/>
    </location>
</feature>
<feature type="helix" evidence="3">
    <location>
        <begin position="16"/>
        <end position="26"/>
    </location>
</feature>
<feature type="helix" evidence="3">
    <location>
        <begin position="31"/>
        <end position="35"/>
    </location>
</feature>
<feature type="strand" evidence="3">
    <location>
        <begin position="39"/>
        <end position="45"/>
    </location>
</feature>
<feature type="strand" evidence="3">
    <location>
        <begin position="48"/>
        <end position="57"/>
    </location>
</feature>
<feature type="helix" evidence="3">
    <location>
        <begin position="60"/>
        <end position="65"/>
    </location>
</feature>
<feature type="helix" evidence="3">
    <location>
        <begin position="70"/>
        <end position="72"/>
    </location>
</feature>
<feature type="helix" evidence="3">
    <location>
        <begin position="73"/>
        <end position="80"/>
    </location>
</feature>
<feature type="strand" evidence="3">
    <location>
        <begin position="83"/>
        <end position="87"/>
    </location>
</feature>
<feature type="helix" evidence="3">
    <location>
        <begin position="93"/>
        <end position="96"/>
    </location>
</feature>
<organism>
    <name type="scientific">Streptomyces glaucescens</name>
    <dbReference type="NCBI Taxonomy" id="1907"/>
    <lineage>
        <taxon>Bacteria</taxon>
        <taxon>Bacillati</taxon>
        <taxon>Actinomycetota</taxon>
        <taxon>Actinomycetes</taxon>
        <taxon>Kitasatosporales</taxon>
        <taxon>Streptomycetaceae</taxon>
        <taxon>Streptomyces</taxon>
    </lineage>
</organism>
<reference key="1">
    <citation type="journal article" date="1992" name="J. Bacteriol.">
        <title>Sequence and transcriptional analysis of the Streptomyces glaucescens tcmAR tetracenomycin C resistance and repressor gene loci.</title>
        <authorList>
            <person name="Guilfoile P.G."/>
            <person name="Hutchinson C.R."/>
        </authorList>
    </citation>
    <scope>NUCLEOTIDE SEQUENCE [GENOMIC DNA]</scope>
    <source>
        <strain>DSM 40716 / ETH 22794 / Tue 49</strain>
    </source>
</reference>
<reference key="2">
    <citation type="journal article" date="1993" name="Biochemistry">
        <title>Tetracenomycin F2 cyclase: intramolecular aldol condensation in the biosynthesis of tetracenomycin C in Streptomyces glaucescens.</title>
        <authorList>
            <person name="Shen B."/>
            <person name="Hutchinson C.R."/>
        </authorList>
    </citation>
    <scope>PROTEIN SEQUENCE OF 2-15</scope>
    <scope>FUNCTION</scope>
    <scope>CATALYTIC ACTIVITY</scope>
    <scope>BIOPHYSICOCHEMICAL PROPERTIES</scope>
    <source>
        <strain>WMH1068</strain>
    </source>
</reference>
<reference key="3">
    <citation type="journal article" date="2004" name="J. Biol. Chem.">
        <title>Structural and functional analysis of tetracenomycin F2 cyclase from Streptomyces glaucescens. A type II polyketide cyclase.</title>
        <authorList>
            <person name="Thompson T.B."/>
            <person name="Katayama K."/>
            <person name="Watanabe K."/>
            <person name="Hutchinson C.R."/>
            <person name="Rayment I."/>
        </authorList>
    </citation>
    <scope>X-RAY CRYSTALLOGRAPHY (1.9 ANGSTROMS)</scope>
    <scope>SUBUNIT</scope>
    <scope>MUTAGENESIS OF HIS-26; ASP-27; ARG-40 AND HIS-51</scope>
</reference>